<accession>Q71U07</accession>
<keyword id="KW-0094">Blood coagulation</keyword>
<keyword id="KW-1015">Disulfide bond</keyword>
<keyword id="KW-0245">EGF-like domain</keyword>
<keyword id="KW-0325">Glycoprotein</keyword>
<keyword id="KW-0356">Hemostasis</keyword>
<keyword id="KW-0379">Hydroxylation</keyword>
<keyword id="KW-0472">Membrane</keyword>
<keyword id="KW-0654">Proteoglycan</keyword>
<keyword id="KW-0675">Receptor</keyword>
<keyword id="KW-0677">Repeat</keyword>
<keyword id="KW-0732">Signal</keyword>
<keyword id="KW-0812">Transmembrane</keyword>
<keyword id="KW-1133">Transmembrane helix</keyword>
<name>TRBM_SAISC</name>
<sequence length="575" mass="60329">MLGVLVLGALALAGLGFPAPAEPQPGGSQCVEHDCFALYPGPATFLNASQICDGLRGHLMTVRSSVAADVISLLLNGDGGVGRRRLWIGLQLPPGCGDPKRLGPLRGFQWVTGDNNTSYSRWARLDLNGAPLCGPLCVAVSAAEATVPSEPIWEEQQCEVKADGFLCEFHFPATCRPLAVEPGAAAAAVSITYGTPFAARGADFQALPVGSSAAVAPLGLQLMCTAPPGAVQGHWAREAPGAWDCSVENGGCEHACNAIPGAPRCQCPAGAALQADGRSCTASATQSCNDLCEHFCVPNPDQPGSYSCMCETGYRLAADQHRCEDVDDCILEPSPCPQRCVNTQGGFECHCYPNYDLVDGECVEPVDPCFRANCEYQCQPLNQTSYLCVCAEGFAPIPHEPHRCQMFCNQTACPADCDPNTQASCECPEGYILDDGFICTDIDECENGGFCSGVCHNLPGTFECICGPDSALARHIGTDCDSGKVDGGDSGSGEPPPSPTPGSTLTPPAVGLVHSGLLIGISIASLCLVVALLALLCHLRKKQGAARAKMEYKCAAPSKEVVLQHVRTERTPQRL</sequence>
<reference key="1">
    <citation type="submission" date="1999-07" db="EMBL/GenBank/DDBJ databases">
        <title>Saimiri sciureus thrombomodulin gene.</title>
        <authorList>
            <person name="Parzy D."/>
            <person name="Fusai T."/>
            <person name="Torrentino M."/>
            <person name="Pouvelle B."/>
            <person name="Gysin J."/>
        </authorList>
    </citation>
    <scope>NUCLEOTIDE SEQUENCE [GENOMIC DNA]</scope>
</reference>
<organism>
    <name type="scientific">Saimiri sciureus</name>
    <name type="common">Common squirrel monkey</name>
    <dbReference type="NCBI Taxonomy" id="9521"/>
    <lineage>
        <taxon>Eukaryota</taxon>
        <taxon>Metazoa</taxon>
        <taxon>Chordata</taxon>
        <taxon>Craniata</taxon>
        <taxon>Vertebrata</taxon>
        <taxon>Euteleostomi</taxon>
        <taxon>Mammalia</taxon>
        <taxon>Eutheria</taxon>
        <taxon>Euarchontoglires</taxon>
        <taxon>Primates</taxon>
        <taxon>Haplorrhini</taxon>
        <taxon>Platyrrhini</taxon>
        <taxon>Cebidae</taxon>
        <taxon>Saimiriinae</taxon>
        <taxon>Saimiri</taxon>
    </lineage>
</organism>
<proteinExistence type="inferred from homology"/>
<comment type="function">
    <text evidence="2 3">Endothelial cell receptor that plays a critical role in regulating several physiological processes including hemostasis, coagulation, fibrinolysis, inflammation, and angiogenesis. Acts as a cofactor for thrombin activation of protein C/PROC on the surface of vascular endothelial cells leading to initiation of the activated protein C anticoagulant pathway. Also accelerates the activation of the plasma carboxypeptidase B2/CPB2, which catalyzes removal of C-terminal basic amino acids from its substrates including kinins or anaphylatoxins leading to fibrinolysis inhibition (By similarity). Plays critical protective roles in changing the cleavage specificity of protease-activated receptor 1/PAR1, inhibiting endothelial cell permeability and inflammation (By similarity). Suppresses inflammation distinctly from its anticoagulant cofactor activity by sequestering HMGB1 thereby preventing it from engaging cellular receptors such as RAGE and contributing to the inflammatory response (By similarity).</text>
</comment>
<comment type="subunit">
    <text evidence="2">Interacts with ITGAL, ITGAM and ITGB2. Interacts with thrombin/F2; this interaction switches the specificity of thrombin from a procoagulant to an anticoagulant and antifibrinolytic protease. Interacts with ANGP1 and ANGP2; these interactions significantly inhibit the generation of activated PC and TAFIa/CPB2 by the thrombin/thrombomodulin complex. Interacts with PF4; this interaction enhances generation of activated protein C. Interacts with HMGB1; this interaction inhibits HMGB1 inflammatory activity.</text>
</comment>
<comment type="subcellular location">
    <subcellularLocation>
        <location evidence="2">Membrane</location>
        <topology evidence="2">Single-pass type I membrane protein</topology>
    </subcellularLocation>
</comment>
<comment type="PTM">
    <text evidence="1">N-glycosylated.</text>
</comment>
<comment type="PTM">
    <text evidence="1">The iron and 2-oxoglutarate dependent 3-hydroxylation of aspartate and asparagine is (R) stereospecific within EGF domains.</text>
</comment>
<gene>
    <name type="primary">THBD</name>
    <name type="synonym">TMSC</name>
</gene>
<dbReference type="EMBL" id="AF169484">
    <property type="protein sequence ID" value="AAD49735.1"/>
    <property type="molecule type" value="Genomic_DNA"/>
</dbReference>
<dbReference type="BMRB" id="Q71U07"/>
<dbReference type="SMR" id="Q71U07"/>
<dbReference type="GlyCosmos" id="Q71U07">
    <property type="glycosylation" value="7 sites, No reported glycans"/>
</dbReference>
<dbReference type="GO" id="GO:0016020">
    <property type="term" value="C:membrane"/>
    <property type="evidence" value="ECO:0007669"/>
    <property type="project" value="UniProtKB-SubCell"/>
</dbReference>
<dbReference type="GO" id="GO:0005509">
    <property type="term" value="F:calcium ion binding"/>
    <property type="evidence" value="ECO:0007669"/>
    <property type="project" value="InterPro"/>
</dbReference>
<dbReference type="GO" id="GO:0004888">
    <property type="term" value="F:transmembrane signaling receptor activity"/>
    <property type="evidence" value="ECO:0007669"/>
    <property type="project" value="InterPro"/>
</dbReference>
<dbReference type="GO" id="GO:0007596">
    <property type="term" value="P:blood coagulation"/>
    <property type="evidence" value="ECO:0007669"/>
    <property type="project" value="UniProtKB-KW"/>
</dbReference>
<dbReference type="CDD" id="cd03600">
    <property type="entry name" value="CLECT_thrombomodulin_like"/>
    <property type="match status" value="1"/>
</dbReference>
<dbReference type="CDD" id="cd00054">
    <property type="entry name" value="EGF_CA"/>
    <property type="match status" value="2"/>
</dbReference>
<dbReference type="CDD" id="cd19941">
    <property type="entry name" value="TIL"/>
    <property type="match status" value="1"/>
</dbReference>
<dbReference type="FunFam" id="2.10.25.10:FF:000406">
    <property type="entry name" value="CD248 molecule"/>
    <property type="match status" value="1"/>
</dbReference>
<dbReference type="FunFam" id="2.10.25.10:FF:000797">
    <property type="entry name" value="Thrombomodulin"/>
    <property type="match status" value="1"/>
</dbReference>
<dbReference type="FunFam" id="2.10.25.10:FF:000816">
    <property type="entry name" value="Thrombomodulin"/>
    <property type="match status" value="1"/>
</dbReference>
<dbReference type="FunFam" id="2.10.25.10:FF:000874">
    <property type="entry name" value="Thrombomodulin"/>
    <property type="match status" value="1"/>
</dbReference>
<dbReference type="FunFam" id="2.10.25.10:FF:000899">
    <property type="entry name" value="Thrombomodulin"/>
    <property type="match status" value="1"/>
</dbReference>
<dbReference type="FunFam" id="2.10.25.10:FF:000927">
    <property type="entry name" value="Thrombomodulin"/>
    <property type="match status" value="1"/>
</dbReference>
<dbReference type="FunFam" id="3.10.100.10:FF:000129">
    <property type="entry name" value="Thrombomodulin"/>
    <property type="match status" value="1"/>
</dbReference>
<dbReference type="Gene3D" id="2.10.25.10">
    <property type="entry name" value="Laminin"/>
    <property type="match status" value="6"/>
</dbReference>
<dbReference type="Gene3D" id="3.10.100.10">
    <property type="entry name" value="Mannose-Binding Protein A, subunit A"/>
    <property type="match status" value="1"/>
</dbReference>
<dbReference type="InterPro" id="IPR001304">
    <property type="entry name" value="C-type_lectin-like"/>
</dbReference>
<dbReference type="InterPro" id="IPR016186">
    <property type="entry name" value="C-type_lectin-like/link_sf"/>
</dbReference>
<dbReference type="InterPro" id="IPR026823">
    <property type="entry name" value="cEGF"/>
</dbReference>
<dbReference type="InterPro" id="IPR016187">
    <property type="entry name" value="CTDL_fold"/>
</dbReference>
<dbReference type="InterPro" id="IPR001881">
    <property type="entry name" value="EGF-like_Ca-bd_dom"/>
</dbReference>
<dbReference type="InterPro" id="IPR000742">
    <property type="entry name" value="EGF-like_dom"/>
</dbReference>
<dbReference type="InterPro" id="IPR000152">
    <property type="entry name" value="EGF-type_Asp/Asn_hydroxyl_site"/>
</dbReference>
<dbReference type="InterPro" id="IPR018097">
    <property type="entry name" value="EGF_Ca-bd_CS"/>
</dbReference>
<dbReference type="InterPro" id="IPR009030">
    <property type="entry name" value="Growth_fac_rcpt_cys_sf"/>
</dbReference>
<dbReference type="InterPro" id="IPR049883">
    <property type="entry name" value="NOTCH1_EGF-like"/>
</dbReference>
<dbReference type="InterPro" id="IPR052126">
    <property type="entry name" value="Spindle_Org/Thrombomodulin"/>
</dbReference>
<dbReference type="InterPro" id="IPR015149">
    <property type="entry name" value="Tme5_EGF-like"/>
</dbReference>
<dbReference type="PANTHER" id="PTHR24036">
    <property type="entry name" value="SKELETOR-RELATED"/>
    <property type="match status" value="1"/>
</dbReference>
<dbReference type="PANTHER" id="PTHR24036:SF5">
    <property type="entry name" value="THROMBOMODULIN"/>
    <property type="match status" value="1"/>
</dbReference>
<dbReference type="Pfam" id="PF12662">
    <property type="entry name" value="cEGF"/>
    <property type="match status" value="1"/>
</dbReference>
<dbReference type="Pfam" id="PF07645">
    <property type="entry name" value="EGF_CA"/>
    <property type="match status" value="1"/>
</dbReference>
<dbReference type="Pfam" id="PF09064">
    <property type="entry name" value="EGF_Tme5"/>
    <property type="match status" value="1"/>
</dbReference>
<dbReference type="Pfam" id="PF14670">
    <property type="entry name" value="FXa_inhibition"/>
    <property type="match status" value="1"/>
</dbReference>
<dbReference type="Pfam" id="PF00059">
    <property type="entry name" value="Lectin_C"/>
    <property type="match status" value="1"/>
</dbReference>
<dbReference type="Pfam" id="PF25444">
    <property type="entry name" value="THBD"/>
    <property type="match status" value="1"/>
</dbReference>
<dbReference type="PIRSF" id="PIRSF001775">
    <property type="entry name" value="CD93/CD141"/>
    <property type="match status" value="1"/>
</dbReference>
<dbReference type="PRINTS" id="PR00907">
    <property type="entry name" value="THRMBOMODULN"/>
</dbReference>
<dbReference type="SMART" id="SM00034">
    <property type="entry name" value="CLECT"/>
    <property type="match status" value="1"/>
</dbReference>
<dbReference type="SMART" id="SM00181">
    <property type="entry name" value="EGF"/>
    <property type="match status" value="6"/>
</dbReference>
<dbReference type="SMART" id="SM00179">
    <property type="entry name" value="EGF_CA"/>
    <property type="match status" value="4"/>
</dbReference>
<dbReference type="SUPFAM" id="SSF56436">
    <property type="entry name" value="C-type lectin-like"/>
    <property type="match status" value="1"/>
</dbReference>
<dbReference type="SUPFAM" id="SSF57196">
    <property type="entry name" value="EGF/Laminin"/>
    <property type="match status" value="3"/>
</dbReference>
<dbReference type="SUPFAM" id="SSF57184">
    <property type="entry name" value="Growth factor receptor domain"/>
    <property type="match status" value="1"/>
</dbReference>
<dbReference type="PROSITE" id="PS00010">
    <property type="entry name" value="ASX_HYDROXYL"/>
    <property type="match status" value="2"/>
</dbReference>
<dbReference type="PROSITE" id="PS50041">
    <property type="entry name" value="C_TYPE_LECTIN_2"/>
    <property type="match status" value="1"/>
</dbReference>
<dbReference type="PROSITE" id="PS01186">
    <property type="entry name" value="EGF_2"/>
    <property type="match status" value="2"/>
</dbReference>
<dbReference type="PROSITE" id="PS50026">
    <property type="entry name" value="EGF_3"/>
    <property type="match status" value="4"/>
</dbReference>
<dbReference type="PROSITE" id="PS01187">
    <property type="entry name" value="EGF_CA"/>
    <property type="match status" value="2"/>
</dbReference>
<protein>
    <recommendedName>
        <fullName>Thrombomodulin</fullName>
        <shortName>TM</shortName>
    </recommendedName>
    <cdAntigenName>CD141</cdAntigenName>
</protein>
<evidence type="ECO:0000250" key="1"/>
<evidence type="ECO:0000250" key="2">
    <source>
        <dbReference type="UniProtKB" id="P07204"/>
    </source>
</evidence>
<evidence type="ECO:0000250" key="3">
    <source>
        <dbReference type="UniProtKB" id="P15306"/>
    </source>
</evidence>
<evidence type="ECO:0000255" key="4"/>
<evidence type="ECO:0000255" key="5">
    <source>
        <dbReference type="PROSITE-ProRule" id="PRU00040"/>
    </source>
</evidence>
<evidence type="ECO:0000255" key="6">
    <source>
        <dbReference type="PROSITE-ProRule" id="PRU00076"/>
    </source>
</evidence>
<evidence type="ECO:0000256" key="7">
    <source>
        <dbReference type="SAM" id="MobiDB-lite"/>
    </source>
</evidence>
<feature type="signal peptide" evidence="1">
    <location>
        <begin position="1"/>
        <end position="18"/>
    </location>
</feature>
<feature type="chain" id="PRO_0000007773" description="Thrombomodulin">
    <location>
        <begin position="19"/>
        <end position="575"/>
    </location>
</feature>
<feature type="topological domain" description="Extracellular" evidence="4">
    <location>
        <begin position="19"/>
        <end position="515"/>
    </location>
</feature>
<feature type="transmembrane region" description="Helical" evidence="4">
    <location>
        <begin position="516"/>
        <end position="539"/>
    </location>
</feature>
<feature type="topological domain" description="Cytoplasmic" evidence="4">
    <location>
        <begin position="540"/>
        <end position="575"/>
    </location>
</feature>
<feature type="domain" description="C-type lectin" evidence="5">
    <location>
        <begin position="31"/>
        <end position="169"/>
    </location>
</feature>
<feature type="domain" description="EGF-like 1" evidence="6">
    <location>
        <begin position="241"/>
        <end position="281"/>
    </location>
</feature>
<feature type="domain" description="EGF-like 2" evidence="6">
    <location>
        <begin position="284"/>
        <end position="324"/>
    </location>
</feature>
<feature type="domain" description="EGF-like 3; calcium-binding" evidence="6">
    <location>
        <begin position="325"/>
        <end position="363"/>
    </location>
</feature>
<feature type="domain" description="EGF-like 4" evidence="6">
    <location>
        <begin position="365"/>
        <end position="405"/>
    </location>
</feature>
<feature type="domain" description="EGF-like 5" evidence="6">
    <location>
        <begin position="404"/>
        <end position="440"/>
    </location>
</feature>
<feature type="domain" description="EGF-like 6; calcium-binding" evidence="6">
    <location>
        <begin position="441"/>
        <end position="481"/>
    </location>
</feature>
<feature type="region of interest" description="Disordered" evidence="7">
    <location>
        <begin position="484"/>
        <end position="506"/>
    </location>
</feature>
<feature type="modified residue" description="(3R)-3-hydroxyasparagine" evidence="1">
    <location>
        <position position="342"/>
    </location>
</feature>
<feature type="glycosylation site" description="N-linked (GlcNAc...) asparagine" evidence="4">
    <location>
        <position position="47"/>
    </location>
</feature>
<feature type="glycosylation site" description="N-linked (GlcNAc...) asparagine" evidence="4">
    <location>
        <position position="115"/>
    </location>
</feature>
<feature type="glycosylation site" description="N-linked (GlcNAc...) asparagine" evidence="4">
    <location>
        <position position="116"/>
    </location>
</feature>
<feature type="glycosylation site" description="N-linked (GlcNAc...) asparagine" evidence="4">
    <location>
        <position position="382"/>
    </location>
</feature>
<feature type="glycosylation site" description="N-linked (GlcNAc...) asparagine" evidence="4">
    <location>
        <position position="409"/>
    </location>
</feature>
<feature type="glycosylation site" description="O-linked (Xyl...) (chondroitin sulfate) serine" evidence="2">
    <location>
        <position position="490"/>
    </location>
</feature>
<feature type="glycosylation site" description="O-linked (Xyl...) (chondroitin sulfate) serine" evidence="2">
    <location>
        <position position="492"/>
    </location>
</feature>
<feature type="disulfide bond" evidence="1">
    <location>
        <begin position="137"/>
        <end position="158"/>
    </location>
</feature>
<feature type="disulfide bond" evidence="1">
    <location>
        <begin position="245"/>
        <end position="256"/>
    </location>
</feature>
<feature type="disulfide bond" evidence="1">
    <location>
        <begin position="252"/>
        <end position="265"/>
    </location>
</feature>
<feature type="disulfide bond" evidence="1">
    <location>
        <begin position="267"/>
        <end position="280"/>
    </location>
</feature>
<feature type="disulfide bond" evidence="1">
    <location>
        <begin position="288"/>
        <end position="296"/>
    </location>
</feature>
<feature type="disulfide bond" evidence="1">
    <location>
        <begin position="292"/>
        <end position="308"/>
    </location>
</feature>
<feature type="disulfide bond" evidence="1">
    <location>
        <begin position="310"/>
        <end position="323"/>
    </location>
</feature>
<feature type="disulfide bond" evidence="1">
    <location>
        <begin position="329"/>
        <end position="340"/>
    </location>
</feature>
<feature type="disulfide bond" evidence="1">
    <location>
        <begin position="336"/>
        <end position="349"/>
    </location>
</feature>
<feature type="disulfide bond" evidence="1">
    <location>
        <begin position="351"/>
        <end position="362"/>
    </location>
</feature>
<feature type="disulfide bond" evidence="1">
    <location>
        <begin position="369"/>
        <end position="378"/>
    </location>
</feature>
<feature type="disulfide bond" evidence="1">
    <location>
        <begin position="374"/>
        <end position="388"/>
    </location>
</feature>
<feature type="disulfide bond" evidence="1">
    <location>
        <begin position="390"/>
        <end position="404"/>
    </location>
</feature>
<feature type="disulfide bond" evidence="1">
    <location>
        <begin position="408"/>
        <end position="413"/>
    </location>
</feature>
<feature type="disulfide bond" evidence="1">
    <location>
        <begin position="417"/>
        <end position="425"/>
    </location>
</feature>
<feature type="disulfide bond" evidence="1">
    <location>
        <begin position="427"/>
        <end position="439"/>
    </location>
</feature>
<feature type="disulfide bond" evidence="1">
    <location>
        <begin position="445"/>
        <end position="455"/>
    </location>
</feature>
<feature type="disulfide bond" evidence="1">
    <location>
        <begin position="451"/>
        <end position="464"/>
    </location>
</feature>
<feature type="disulfide bond" evidence="1">
    <location>
        <begin position="466"/>
        <end position="480"/>
    </location>
</feature>